<comment type="function">
    <text evidence="1">Catalyzes the formation of 5-methyl-uridine at position 747 (m5U747) in 23S rRNA.</text>
</comment>
<comment type="catalytic activity">
    <reaction evidence="1">
        <text>uridine(747) in 23S rRNA + S-adenosyl-L-methionine = 5-methyluridine(747) in 23S rRNA + S-adenosyl-L-homocysteine + H(+)</text>
        <dbReference type="Rhea" id="RHEA:42628"/>
        <dbReference type="Rhea" id="RHEA-COMP:10154"/>
        <dbReference type="Rhea" id="RHEA-COMP:10155"/>
        <dbReference type="ChEBI" id="CHEBI:15378"/>
        <dbReference type="ChEBI" id="CHEBI:57856"/>
        <dbReference type="ChEBI" id="CHEBI:59789"/>
        <dbReference type="ChEBI" id="CHEBI:65315"/>
        <dbReference type="ChEBI" id="CHEBI:74447"/>
        <dbReference type="EC" id="2.1.1.189"/>
    </reaction>
</comment>
<comment type="similarity">
    <text evidence="1">Belongs to the class I-like SAM-binding methyltransferase superfamily. RNA M5U methyltransferase family. RlmC subfamily.</text>
</comment>
<sequence>MQCAQYTAGHCHSCQWLNKSYSQQLSDKQQHLQQLLRETSATYWLPPVSSLISGFRNKAKMVVSGSVERPQLGMLHRDGRTVDLCDCPLYPQYFQLVFESIKIFIAKAGLVPYNVARKKGELKYILLTESRASGEMMLRFVLRSETKLAQLEHALPWLQEQLPQLTVISANIQPTHMAILEGEKEVIFTEHKMLKEIFNGIPLYIRPRSFFQTNPEIASALYATAGRWVRELNISSMWDLFCGAGGFGLHCADKETRLTGIEISAEAIACAKNSAKSLGLEQVEFQALDSTHFALDKAQLPELVLVNPPRRGIGKALCEYLSRMAPKFILYSSCNAETMAKDIAALEQYRIEKVQLFDMFPHTEHYETLALLIFDGK</sequence>
<evidence type="ECO:0000255" key="1">
    <source>
        <dbReference type="HAMAP-Rule" id="MF_01012"/>
    </source>
</evidence>
<feature type="chain" id="PRO_0000414825" description="23S rRNA (uracil(747)-C(5))-methyltransferase RlmC">
    <location>
        <begin position="1"/>
        <end position="377"/>
    </location>
</feature>
<feature type="active site" description="Nucleophile" evidence="1">
    <location>
        <position position="334"/>
    </location>
</feature>
<feature type="binding site" evidence="1">
    <location>
        <position position="3"/>
    </location>
    <ligand>
        <name>[4Fe-4S] cluster</name>
        <dbReference type="ChEBI" id="CHEBI:49883"/>
    </ligand>
</feature>
<feature type="binding site" evidence="1">
    <location>
        <position position="11"/>
    </location>
    <ligand>
        <name>[4Fe-4S] cluster</name>
        <dbReference type="ChEBI" id="CHEBI:49883"/>
    </ligand>
</feature>
<feature type="binding site" evidence="1">
    <location>
        <position position="14"/>
    </location>
    <ligand>
        <name>[4Fe-4S] cluster</name>
        <dbReference type="ChEBI" id="CHEBI:49883"/>
    </ligand>
</feature>
<feature type="binding site" evidence="1">
    <location>
        <position position="87"/>
    </location>
    <ligand>
        <name>[4Fe-4S] cluster</name>
        <dbReference type="ChEBI" id="CHEBI:49883"/>
    </ligand>
</feature>
<feature type="binding site" evidence="1">
    <location>
        <position position="212"/>
    </location>
    <ligand>
        <name>S-adenosyl-L-methionine</name>
        <dbReference type="ChEBI" id="CHEBI:59789"/>
    </ligand>
</feature>
<feature type="binding site" evidence="1">
    <location>
        <position position="241"/>
    </location>
    <ligand>
        <name>S-adenosyl-L-methionine</name>
        <dbReference type="ChEBI" id="CHEBI:59789"/>
    </ligand>
</feature>
<feature type="binding site" evidence="1">
    <location>
        <position position="262"/>
    </location>
    <ligand>
        <name>S-adenosyl-L-methionine</name>
        <dbReference type="ChEBI" id="CHEBI:59789"/>
    </ligand>
</feature>
<feature type="binding site" evidence="1">
    <location>
        <position position="307"/>
    </location>
    <ligand>
        <name>S-adenosyl-L-methionine</name>
        <dbReference type="ChEBI" id="CHEBI:59789"/>
    </ligand>
</feature>
<gene>
    <name evidence="1" type="primary">rlmC</name>
    <name type="ordered locus">XBJ1_0906</name>
</gene>
<name>RLMC_XENBS</name>
<dbReference type="EC" id="2.1.1.189" evidence="1"/>
<dbReference type="EMBL" id="FN667741">
    <property type="protein sequence ID" value="CBJ80047.1"/>
    <property type="molecule type" value="Genomic_DNA"/>
</dbReference>
<dbReference type="RefSeq" id="WP_012987469.1">
    <property type="nucleotide sequence ID" value="NC_013892.1"/>
</dbReference>
<dbReference type="SMR" id="D3UZL8"/>
<dbReference type="STRING" id="406818.XBJ1_0906"/>
<dbReference type="KEGG" id="xbo:XBJ1_0906"/>
<dbReference type="PATRIC" id="fig|406818.4.peg.823"/>
<dbReference type="eggNOG" id="COG2265">
    <property type="taxonomic scope" value="Bacteria"/>
</dbReference>
<dbReference type="HOGENOM" id="CLU_014689_0_0_6"/>
<dbReference type="Proteomes" id="UP000002045">
    <property type="component" value="Chromosome"/>
</dbReference>
<dbReference type="GO" id="GO:0051539">
    <property type="term" value="F:4 iron, 4 sulfur cluster binding"/>
    <property type="evidence" value="ECO:0007669"/>
    <property type="project" value="UniProtKB-KW"/>
</dbReference>
<dbReference type="GO" id="GO:0005506">
    <property type="term" value="F:iron ion binding"/>
    <property type="evidence" value="ECO:0007669"/>
    <property type="project" value="UniProtKB-UniRule"/>
</dbReference>
<dbReference type="GO" id="GO:0070041">
    <property type="term" value="F:rRNA (uridine-C5-)-methyltransferase activity"/>
    <property type="evidence" value="ECO:0007669"/>
    <property type="project" value="UniProtKB-UniRule"/>
</dbReference>
<dbReference type="GO" id="GO:0070475">
    <property type="term" value="P:rRNA base methylation"/>
    <property type="evidence" value="ECO:0007669"/>
    <property type="project" value="TreeGrafter"/>
</dbReference>
<dbReference type="CDD" id="cd02440">
    <property type="entry name" value="AdoMet_MTases"/>
    <property type="match status" value="1"/>
</dbReference>
<dbReference type="FunFam" id="2.40.50.1070:FF:000002">
    <property type="entry name" value="23S rRNA (uracil(747)-C(5))-methyltransferase RlmC"/>
    <property type="match status" value="1"/>
</dbReference>
<dbReference type="Gene3D" id="2.40.50.1070">
    <property type="match status" value="1"/>
</dbReference>
<dbReference type="Gene3D" id="3.40.50.150">
    <property type="entry name" value="Vaccinia Virus protein VP39"/>
    <property type="match status" value="1"/>
</dbReference>
<dbReference type="HAMAP" id="MF_01012">
    <property type="entry name" value="23SrRNA_methyltr_RlmC"/>
    <property type="match status" value="1"/>
</dbReference>
<dbReference type="InterPro" id="IPR011825">
    <property type="entry name" value="23SrRNA_MeTrfase_RlmC"/>
</dbReference>
<dbReference type="InterPro" id="IPR030390">
    <property type="entry name" value="MeTrfase_TrmA_AS"/>
</dbReference>
<dbReference type="InterPro" id="IPR030391">
    <property type="entry name" value="MeTrfase_TrmA_CS"/>
</dbReference>
<dbReference type="InterPro" id="IPR029063">
    <property type="entry name" value="SAM-dependent_MTases_sf"/>
</dbReference>
<dbReference type="InterPro" id="IPR010280">
    <property type="entry name" value="U5_MeTrfase_fam"/>
</dbReference>
<dbReference type="NCBIfam" id="TIGR02085">
    <property type="entry name" value="meth_trns_rumB"/>
    <property type="match status" value="1"/>
</dbReference>
<dbReference type="NCBIfam" id="TIGR00479">
    <property type="entry name" value="rumA"/>
    <property type="match status" value="1"/>
</dbReference>
<dbReference type="PANTHER" id="PTHR11061">
    <property type="entry name" value="RNA M5U METHYLTRANSFERASE"/>
    <property type="match status" value="1"/>
</dbReference>
<dbReference type="PANTHER" id="PTHR11061:SF30">
    <property type="entry name" value="TRNA (URACIL(54)-C(5))-METHYLTRANSFERASE"/>
    <property type="match status" value="1"/>
</dbReference>
<dbReference type="Pfam" id="PF05958">
    <property type="entry name" value="tRNA_U5-meth_tr"/>
    <property type="match status" value="1"/>
</dbReference>
<dbReference type="SUPFAM" id="SSF53335">
    <property type="entry name" value="S-adenosyl-L-methionine-dependent methyltransferases"/>
    <property type="match status" value="1"/>
</dbReference>
<dbReference type="PROSITE" id="PS51687">
    <property type="entry name" value="SAM_MT_RNA_M5U"/>
    <property type="match status" value="1"/>
</dbReference>
<dbReference type="PROSITE" id="PS01230">
    <property type="entry name" value="TRMA_1"/>
    <property type="match status" value="1"/>
</dbReference>
<dbReference type="PROSITE" id="PS01231">
    <property type="entry name" value="TRMA_2"/>
    <property type="match status" value="1"/>
</dbReference>
<reference key="1">
    <citation type="journal article" date="2011" name="PLoS ONE">
        <title>The entomopathogenic bacterial endosymbionts xenorhabdus and photorhabdus: convergent lifestyles from divergent genomes.</title>
        <authorList>
            <person name="Chaston J.M."/>
            <person name="Suen G."/>
            <person name="Tucker S.L."/>
            <person name="Andersen A.W."/>
            <person name="Bhasin A."/>
            <person name="Bode E."/>
            <person name="Bode H.B."/>
            <person name="Brachmann A.O."/>
            <person name="Cowles C.E."/>
            <person name="Cowles K.N."/>
            <person name="Darby C."/>
            <person name="de Leon L."/>
            <person name="Drace K."/>
            <person name="Du Z."/>
            <person name="Givaudan A."/>
            <person name="Herbert Tran E.E."/>
            <person name="Jewell K.A."/>
            <person name="Knack J.J."/>
            <person name="Krasomil-Osterfeld K.C."/>
            <person name="Kukor R."/>
            <person name="Lanois A."/>
            <person name="Latreille P."/>
            <person name="Leimgruber N.K."/>
            <person name="Lipke C.M."/>
            <person name="Liu R."/>
            <person name="Lu X."/>
            <person name="Martens E.C."/>
            <person name="Marri P.R."/>
            <person name="Medigue C."/>
            <person name="Menard M.L."/>
            <person name="Miller N.M."/>
            <person name="Morales-Soto N."/>
            <person name="Norton S."/>
            <person name="Ogier J.C."/>
            <person name="Orchard S.S."/>
            <person name="Park D."/>
            <person name="Park Y."/>
            <person name="Qurollo B.A."/>
            <person name="Sugar D.R."/>
            <person name="Richards G.R."/>
            <person name="Rouy Z."/>
            <person name="Slominski B."/>
            <person name="Slominski K."/>
            <person name="Snyder H."/>
            <person name="Tjaden B.C."/>
            <person name="van der Hoeven R."/>
            <person name="Welch R.D."/>
            <person name="Wheeler C."/>
            <person name="Xiang B."/>
            <person name="Barbazuk B."/>
            <person name="Gaudriault S."/>
            <person name="Goodner B."/>
            <person name="Slater S.C."/>
            <person name="Forst S."/>
            <person name="Goldman B.S."/>
            <person name="Goodrich-Blair H."/>
        </authorList>
    </citation>
    <scope>NUCLEOTIDE SEQUENCE [LARGE SCALE GENOMIC DNA]</scope>
    <source>
        <strain>SS-2004</strain>
    </source>
</reference>
<accession>D3UZL8</accession>
<proteinExistence type="inferred from homology"/>
<protein>
    <recommendedName>
        <fullName evidence="1">23S rRNA (uracil(747)-C(5))-methyltransferase RlmC</fullName>
        <ecNumber evidence="1">2.1.1.189</ecNumber>
    </recommendedName>
    <alternativeName>
        <fullName evidence="1">23S rRNA(m5U747)-methyltransferase</fullName>
    </alternativeName>
</protein>
<organism>
    <name type="scientific">Xenorhabdus bovienii (strain SS-2004)</name>
    <name type="common">Xenorhabdus nematophila subsp. bovienii</name>
    <dbReference type="NCBI Taxonomy" id="406818"/>
    <lineage>
        <taxon>Bacteria</taxon>
        <taxon>Pseudomonadati</taxon>
        <taxon>Pseudomonadota</taxon>
        <taxon>Gammaproteobacteria</taxon>
        <taxon>Enterobacterales</taxon>
        <taxon>Morganellaceae</taxon>
        <taxon>Xenorhabdus</taxon>
    </lineage>
</organism>
<keyword id="KW-0004">4Fe-4S</keyword>
<keyword id="KW-0408">Iron</keyword>
<keyword id="KW-0411">Iron-sulfur</keyword>
<keyword id="KW-0479">Metal-binding</keyword>
<keyword id="KW-0489">Methyltransferase</keyword>
<keyword id="KW-0698">rRNA processing</keyword>
<keyword id="KW-0949">S-adenosyl-L-methionine</keyword>
<keyword id="KW-0808">Transferase</keyword>